<dbReference type="EMBL" id="AP003835">
    <property type="protein sequence ID" value="BAC83117.1"/>
    <property type="molecule type" value="Genomic_DNA"/>
</dbReference>
<dbReference type="EMBL" id="AP008213">
    <property type="protein sequence ID" value="BAF20965.1"/>
    <property type="molecule type" value="Genomic_DNA"/>
</dbReference>
<dbReference type="EMBL" id="AP014963">
    <property type="protein sequence ID" value="BAT00332.1"/>
    <property type="molecule type" value="Genomic_DNA"/>
</dbReference>
<dbReference type="EMBL" id="AK103483">
    <property type="protein sequence ID" value="BAG96104.1"/>
    <property type="molecule type" value="mRNA"/>
</dbReference>
<dbReference type="RefSeq" id="XP_015645192.1">
    <property type="nucleotide sequence ID" value="XM_015789706.1"/>
</dbReference>
<dbReference type="SMR" id="Q6ZL57"/>
<dbReference type="FunCoup" id="Q6ZL57">
    <property type="interactions" value="30"/>
</dbReference>
<dbReference type="STRING" id="39947.Q6ZL57"/>
<dbReference type="PaxDb" id="39947-Q6ZL57"/>
<dbReference type="EnsemblPlants" id="Os07t0182400-01">
    <property type="protein sequence ID" value="Os07t0182400-01"/>
    <property type="gene ID" value="Os07g0182400"/>
</dbReference>
<dbReference type="Gramene" id="Os07t0182400-01">
    <property type="protein sequence ID" value="Os07t0182400-01"/>
    <property type="gene ID" value="Os07g0182400"/>
</dbReference>
<dbReference type="KEGG" id="dosa:Os07g0182400"/>
<dbReference type="eggNOG" id="ENOG502QU81">
    <property type="taxonomic scope" value="Eukaryota"/>
</dbReference>
<dbReference type="HOGENOM" id="CLU_049393_0_0_1"/>
<dbReference type="InParanoid" id="Q6ZL57"/>
<dbReference type="OMA" id="KCTENND"/>
<dbReference type="OrthoDB" id="1926344at2759"/>
<dbReference type="Proteomes" id="UP000000763">
    <property type="component" value="Chromosome 7"/>
</dbReference>
<dbReference type="Proteomes" id="UP000059680">
    <property type="component" value="Chromosome 7"/>
</dbReference>
<dbReference type="GO" id="GO:0005634">
    <property type="term" value="C:nucleus"/>
    <property type="evidence" value="ECO:0007669"/>
    <property type="project" value="UniProtKB-SubCell"/>
</dbReference>
<dbReference type="GO" id="GO:0009734">
    <property type="term" value="P:auxin-activated signaling pathway"/>
    <property type="evidence" value="ECO:0007669"/>
    <property type="project" value="UniProtKB-KW"/>
</dbReference>
<dbReference type="GO" id="GO:0006355">
    <property type="term" value="P:regulation of DNA-templated transcription"/>
    <property type="evidence" value="ECO:0007669"/>
    <property type="project" value="InterPro"/>
</dbReference>
<dbReference type="GO" id="GO:0009733">
    <property type="term" value="P:response to auxin"/>
    <property type="evidence" value="ECO:0000250"/>
    <property type="project" value="Gramene"/>
</dbReference>
<dbReference type="Gene3D" id="3.10.20.90">
    <property type="entry name" value="Phosphatidylinositol 3-kinase Catalytic Subunit, Chain A, domain 1"/>
    <property type="match status" value="1"/>
</dbReference>
<dbReference type="InterPro" id="IPR033389">
    <property type="entry name" value="AUX/IAA_dom"/>
</dbReference>
<dbReference type="InterPro" id="IPR003311">
    <property type="entry name" value="AUX_IAA"/>
</dbReference>
<dbReference type="InterPro" id="IPR053793">
    <property type="entry name" value="PB1-like"/>
</dbReference>
<dbReference type="PANTHER" id="PTHR31734">
    <property type="entry name" value="AUXIN-RESPONSIVE PROTEIN IAA17"/>
    <property type="match status" value="1"/>
</dbReference>
<dbReference type="PANTHER" id="PTHR31734:SF8">
    <property type="entry name" value="AUXIN-RESPONSIVE PROTEIN IAA24"/>
    <property type="match status" value="1"/>
</dbReference>
<dbReference type="Pfam" id="PF02309">
    <property type="entry name" value="AUX_IAA"/>
    <property type="match status" value="1"/>
</dbReference>
<dbReference type="SUPFAM" id="SSF54277">
    <property type="entry name" value="CAD &amp; PB1 domains"/>
    <property type="match status" value="1"/>
</dbReference>
<dbReference type="PROSITE" id="PS51745">
    <property type="entry name" value="PB1"/>
    <property type="match status" value="1"/>
</dbReference>
<organism>
    <name type="scientific">Oryza sativa subsp. japonica</name>
    <name type="common">Rice</name>
    <dbReference type="NCBI Taxonomy" id="39947"/>
    <lineage>
        <taxon>Eukaryota</taxon>
        <taxon>Viridiplantae</taxon>
        <taxon>Streptophyta</taxon>
        <taxon>Embryophyta</taxon>
        <taxon>Tracheophyta</taxon>
        <taxon>Spermatophyta</taxon>
        <taxon>Magnoliopsida</taxon>
        <taxon>Liliopsida</taxon>
        <taxon>Poales</taxon>
        <taxon>Poaceae</taxon>
        <taxon>BOP clade</taxon>
        <taxon>Oryzoideae</taxon>
        <taxon>Oryzeae</taxon>
        <taxon>Oryzinae</taxon>
        <taxon>Oryza</taxon>
        <taxon>Oryza sativa</taxon>
    </lineage>
</organism>
<name>IAA24_ORYSJ</name>
<comment type="function">
    <text evidence="1">Aux/IAA proteins are short-lived transcriptional factors that function as repressors of early auxin response genes at low auxin concentrations.</text>
</comment>
<comment type="subunit">
    <text evidence="1">Homodimers and heterodimers.</text>
</comment>
<comment type="subcellular location">
    <subcellularLocation>
        <location evidence="1">Nucleus</location>
    </subcellularLocation>
</comment>
<comment type="tissue specificity">
    <text evidence="4">Highly expressed in flowers. Expressed in seedlings.</text>
</comment>
<comment type="induction">
    <text evidence="4">By auxin.</text>
</comment>
<comment type="similarity">
    <text evidence="5">Belongs to the Aux/IAA family.</text>
</comment>
<reference key="1">
    <citation type="journal article" date="2005" name="Nature">
        <title>The map-based sequence of the rice genome.</title>
        <authorList>
            <consortium name="International rice genome sequencing project (IRGSP)"/>
        </authorList>
    </citation>
    <scope>NUCLEOTIDE SEQUENCE [LARGE SCALE GENOMIC DNA]</scope>
    <source>
        <strain>cv. Nipponbare</strain>
    </source>
</reference>
<reference key="2">
    <citation type="journal article" date="2008" name="Nucleic Acids Res.">
        <title>The rice annotation project database (RAP-DB): 2008 update.</title>
        <authorList>
            <consortium name="The rice annotation project (RAP)"/>
        </authorList>
    </citation>
    <scope>GENOME REANNOTATION</scope>
    <source>
        <strain>cv. Nipponbare</strain>
    </source>
</reference>
<reference key="3">
    <citation type="journal article" date="2013" name="Rice">
        <title>Improvement of the Oryza sativa Nipponbare reference genome using next generation sequence and optical map data.</title>
        <authorList>
            <person name="Kawahara Y."/>
            <person name="de la Bastide M."/>
            <person name="Hamilton J.P."/>
            <person name="Kanamori H."/>
            <person name="McCombie W.R."/>
            <person name="Ouyang S."/>
            <person name="Schwartz D.C."/>
            <person name="Tanaka T."/>
            <person name="Wu J."/>
            <person name="Zhou S."/>
            <person name="Childs K.L."/>
            <person name="Davidson R.M."/>
            <person name="Lin H."/>
            <person name="Quesada-Ocampo L."/>
            <person name="Vaillancourt B."/>
            <person name="Sakai H."/>
            <person name="Lee S.S."/>
            <person name="Kim J."/>
            <person name="Numa H."/>
            <person name="Itoh T."/>
            <person name="Buell C.R."/>
            <person name="Matsumoto T."/>
        </authorList>
    </citation>
    <scope>GENOME REANNOTATION</scope>
    <source>
        <strain>cv. Nipponbare</strain>
    </source>
</reference>
<reference key="4">
    <citation type="journal article" date="2003" name="Science">
        <title>Collection, mapping, and annotation of over 28,000 cDNA clones from japonica rice.</title>
        <authorList>
            <consortium name="The rice full-length cDNA consortium"/>
        </authorList>
    </citation>
    <scope>NUCLEOTIDE SEQUENCE [LARGE SCALE MRNA]</scope>
    <source>
        <strain>cv. Nipponbare</strain>
    </source>
</reference>
<reference key="5">
    <citation type="journal article" date="2006" name="Funct. Integr. Genomics">
        <title>Structure and expression analysis of early auxin-responsive Aux/IAA gene family in rice (Oryza sativa).</title>
        <authorList>
            <person name="Jain M."/>
            <person name="Kaur N."/>
            <person name="Garg R."/>
            <person name="Thakur J.K."/>
            <person name="Tyagi A.K."/>
            <person name="Khurana J.P."/>
        </authorList>
    </citation>
    <scope>TISSUE SPECIFICITY</scope>
    <scope>INDUCTION</scope>
    <scope>NOMENCLATURE</scope>
</reference>
<sequence>MASSSSLRSTSCLASAAETDADNLCLRLGPPGSSITTTTTTGGADPAAKRSLGAKRSLESTDSMASGTGTSAAGDEHDDDTAAPAKAQVVGWPPVRAYRRNTFHQAAAAAAATKKGGDEKQKQQQQGGGLYVKVSMDGAPYLRKVDLKMCKGYRELREALDLLFTKCFSATASDGCSDGQFAIAYEDKDGDLMLVGDVPWEMFISSCKKLRIMKGSEAR</sequence>
<protein>
    <recommendedName>
        <fullName>Auxin-responsive protein IAA24</fullName>
    </recommendedName>
    <alternativeName>
        <fullName>Indoleacetic acid-induced protein 24</fullName>
    </alternativeName>
</protein>
<feature type="chain" id="PRO_0000223223" description="Auxin-responsive protein IAA24">
    <location>
        <begin position="1"/>
        <end position="219"/>
    </location>
</feature>
<feature type="domain" description="PB1" evidence="2">
    <location>
        <begin position="129"/>
        <end position="215"/>
    </location>
</feature>
<feature type="region of interest" description="Disordered" evidence="3">
    <location>
        <begin position="24"/>
        <end position="88"/>
    </location>
</feature>
<feature type="region of interest" description="Disordered" evidence="3">
    <location>
        <begin position="109"/>
        <end position="128"/>
    </location>
</feature>
<feature type="short sequence motif" description="EAR-like (transcriptional repression)" evidence="1">
    <location>
        <begin position="24"/>
        <end position="28"/>
    </location>
</feature>
<feature type="compositionally biased region" description="Polar residues" evidence="3">
    <location>
        <begin position="60"/>
        <end position="71"/>
    </location>
</feature>
<keyword id="KW-0927">Auxin signaling pathway</keyword>
<keyword id="KW-0539">Nucleus</keyword>
<keyword id="KW-1185">Reference proteome</keyword>
<keyword id="KW-0678">Repressor</keyword>
<keyword id="KW-0804">Transcription</keyword>
<keyword id="KW-0805">Transcription regulation</keyword>
<evidence type="ECO:0000250" key="1"/>
<evidence type="ECO:0000255" key="2">
    <source>
        <dbReference type="PROSITE-ProRule" id="PRU01081"/>
    </source>
</evidence>
<evidence type="ECO:0000256" key="3">
    <source>
        <dbReference type="SAM" id="MobiDB-lite"/>
    </source>
</evidence>
<evidence type="ECO:0000269" key="4">
    <source>
    </source>
</evidence>
<evidence type="ECO:0000305" key="5"/>
<accession>Q6ZL57</accession>
<accession>Q0D858</accession>
<proteinExistence type="evidence at transcript level"/>
<gene>
    <name type="primary">IAA24</name>
    <name type="ordered locus">Os07g0182400</name>
    <name type="ordered locus">LOC_Os07g08460</name>
    <name type="ORF">OJ1506_G02.8</name>
</gene>